<organism>
    <name type="scientific">Dasypus novemcinctus</name>
    <name type="common">Nine-banded armadillo</name>
    <dbReference type="NCBI Taxonomy" id="9361"/>
    <lineage>
        <taxon>Eukaryota</taxon>
        <taxon>Metazoa</taxon>
        <taxon>Chordata</taxon>
        <taxon>Craniata</taxon>
        <taxon>Vertebrata</taxon>
        <taxon>Euteleostomi</taxon>
        <taxon>Mammalia</taxon>
        <taxon>Eutheria</taxon>
        <taxon>Xenarthra</taxon>
        <taxon>Cingulata</taxon>
        <taxon>Dasypodidae</taxon>
        <taxon>Dasypus</taxon>
    </lineage>
</organism>
<sequence>MMYMVFLLSVAFVISFIGFSSKPSPIYGGLGLIVGGGVGCGIVMGLGGSFLGLMVFLVYLGGMLVVFGYTTAMATEEYPEAWGSNVVILSALFVGLLVEVAMIVWMIVDGEVGLISCGLKDMEDWVVLGGYGMDVVREDYAGGSALYTYGDWLVILAGWSLFVSIFIVIEITRGR</sequence>
<dbReference type="EC" id="7.1.1.2"/>
<dbReference type="EMBL" id="Y11832">
    <property type="protein sequence ID" value="CAA72518.1"/>
    <property type="molecule type" value="Genomic_DNA"/>
</dbReference>
<dbReference type="PIR" id="T11452">
    <property type="entry name" value="T11452"/>
</dbReference>
<dbReference type="RefSeq" id="NP_007470.1">
    <property type="nucleotide sequence ID" value="NC_001821.1"/>
</dbReference>
<dbReference type="SMR" id="O21336"/>
<dbReference type="GeneID" id="808130"/>
<dbReference type="KEGG" id="dnm:808130"/>
<dbReference type="CTD" id="4541"/>
<dbReference type="HOGENOM" id="CLU_129718_0_0_1"/>
<dbReference type="OMA" id="MIAVACN"/>
<dbReference type="GO" id="GO:0031966">
    <property type="term" value="C:mitochondrial membrane"/>
    <property type="evidence" value="ECO:0007669"/>
    <property type="project" value="UniProtKB-SubCell"/>
</dbReference>
<dbReference type="GO" id="GO:0008137">
    <property type="term" value="F:NADH dehydrogenase (ubiquinone) activity"/>
    <property type="evidence" value="ECO:0007669"/>
    <property type="project" value="UniProtKB-EC"/>
</dbReference>
<dbReference type="Gene3D" id="1.20.120.1200">
    <property type="entry name" value="NADH-ubiquinone/plastoquinone oxidoreductase chain 6, subunit NuoJ"/>
    <property type="match status" value="1"/>
</dbReference>
<dbReference type="InterPro" id="IPR050269">
    <property type="entry name" value="ComplexI_Subunit6"/>
</dbReference>
<dbReference type="InterPro" id="IPR001457">
    <property type="entry name" value="NADH_UbQ/plastoQ_OxRdtase_su6"/>
</dbReference>
<dbReference type="InterPro" id="IPR042106">
    <property type="entry name" value="Nuo/plastoQ_OxRdtase_6_NuoJ"/>
</dbReference>
<dbReference type="PANTHER" id="PTHR11435">
    <property type="entry name" value="NADH UBIQUINONE OXIDOREDUCTASE SUBUNIT ND6"/>
    <property type="match status" value="1"/>
</dbReference>
<dbReference type="PANTHER" id="PTHR11435:SF1">
    <property type="entry name" value="NADH-UBIQUINONE OXIDOREDUCTASE CHAIN 6"/>
    <property type="match status" value="1"/>
</dbReference>
<dbReference type="Pfam" id="PF00499">
    <property type="entry name" value="Oxidored_q3"/>
    <property type="match status" value="1"/>
</dbReference>
<geneLocation type="mitochondrion"/>
<feature type="chain" id="PRO_0000118274" description="NADH-ubiquinone oxidoreductase chain 6">
    <location>
        <begin position="1"/>
        <end position="175"/>
    </location>
</feature>
<feature type="transmembrane region" description="Helical" evidence="2">
    <location>
        <begin position="1"/>
        <end position="21"/>
    </location>
</feature>
<feature type="transmembrane region" description="Helical" evidence="2">
    <location>
        <begin position="26"/>
        <end position="46"/>
    </location>
</feature>
<feature type="transmembrane region" description="Helical" evidence="2">
    <location>
        <begin position="47"/>
        <end position="67"/>
    </location>
</feature>
<feature type="transmembrane region" description="Helical" evidence="2">
    <location>
        <begin position="87"/>
        <end position="107"/>
    </location>
</feature>
<feature type="transmembrane region" description="Helical" evidence="2">
    <location>
        <begin position="152"/>
        <end position="172"/>
    </location>
</feature>
<accession>O21336</accession>
<protein>
    <recommendedName>
        <fullName>NADH-ubiquinone oxidoreductase chain 6</fullName>
        <ecNumber>7.1.1.2</ecNumber>
    </recommendedName>
    <alternativeName>
        <fullName>NADH dehydrogenase subunit 6</fullName>
    </alternativeName>
</protein>
<gene>
    <name type="primary">MT-ND6</name>
    <name type="synonym">MTND6</name>
    <name type="synonym">NADH6</name>
    <name type="synonym">ND6</name>
</gene>
<name>NU6M_DASNO</name>
<evidence type="ECO:0000250" key="1"/>
<evidence type="ECO:0000255" key="2"/>
<evidence type="ECO:0000305" key="3"/>
<comment type="function">
    <text evidence="1">Core subunit of the mitochondrial membrane respiratory chain NADH dehydrogenase (Complex I) that is believed to belong to the minimal assembly required for catalysis. Complex I functions in the transfer of electrons from NADH to the respiratory chain. The immediate electron acceptor for the enzyme is believed to be ubiquinone (By similarity).</text>
</comment>
<comment type="catalytic activity">
    <reaction>
        <text>a ubiquinone + NADH + 5 H(+)(in) = a ubiquinol + NAD(+) + 4 H(+)(out)</text>
        <dbReference type="Rhea" id="RHEA:29091"/>
        <dbReference type="Rhea" id="RHEA-COMP:9565"/>
        <dbReference type="Rhea" id="RHEA-COMP:9566"/>
        <dbReference type="ChEBI" id="CHEBI:15378"/>
        <dbReference type="ChEBI" id="CHEBI:16389"/>
        <dbReference type="ChEBI" id="CHEBI:17976"/>
        <dbReference type="ChEBI" id="CHEBI:57540"/>
        <dbReference type="ChEBI" id="CHEBI:57945"/>
        <dbReference type="EC" id="7.1.1.2"/>
    </reaction>
</comment>
<comment type="subcellular location">
    <subcellularLocation>
        <location evidence="3">Mitochondrion membrane</location>
        <topology evidence="3">Multi-pass membrane protein</topology>
    </subcellularLocation>
</comment>
<comment type="similarity">
    <text evidence="3">Belongs to the complex I subunit 6 family.</text>
</comment>
<keyword id="KW-0249">Electron transport</keyword>
<keyword id="KW-0472">Membrane</keyword>
<keyword id="KW-0496">Mitochondrion</keyword>
<keyword id="KW-0520">NAD</keyword>
<keyword id="KW-0679">Respiratory chain</keyword>
<keyword id="KW-1278">Translocase</keyword>
<keyword id="KW-0812">Transmembrane</keyword>
<keyword id="KW-1133">Transmembrane helix</keyword>
<keyword id="KW-0813">Transport</keyword>
<keyword id="KW-0830">Ubiquinone</keyword>
<proteinExistence type="inferred from homology"/>
<reference key="1">
    <citation type="journal article" date="1997" name="Mol. Biol. Evol.">
        <title>Phylogenetic analyses of mitochondrial DNA suggest a sister group relationship between Xenarthra (Edentata) and Ferungulates.</title>
        <authorList>
            <person name="Arnason U."/>
            <person name="Gullberg A."/>
            <person name="Janke A."/>
        </authorList>
    </citation>
    <scope>NUCLEOTIDE SEQUENCE [GENOMIC DNA]</scope>
</reference>